<name>ORYA_ASPOR</name>
<gene>
    <name evidence="8" type="primary">oryfasA</name>
    <name type="ORF">AO090010000171</name>
</gene>
<evidence type="ECO:0000250" key="1">
    <source>
        <dbReference type="UniProtKB" id="P19097"/>
    </source>
</evidence>
<evidence type="ECO:0000250" key="2">
    <source>
        <dbReference type="UniProtKB" id="Q8TGA2"/>
    </source>
</evidence>
<evidence type="ECO:0000255" key="3"/>
<evidence type="ECO:0000255" key="4">
    <source>
        <dbReference type="PROSITE-ProRule" id="PRU00258"/>
    </source>
</evidence>
<evidence type="ECO:0000255" key="5">
    <source>
        <dbReference type="PROSITE-ProRule" id="PRU01348"/>
    </source>
</evidence>
<evidence type="ECO:0000256" key="6">
    <source>
        <dbReference type="SAM" id="MobiDB-lite"/>
    </source>
</evidence>
<evidence type="ECO:0000269" key="7">
    <source>
    </source>
</evidence>
<evidence type="ECO:0000303" key="8">
    <source>
    </source>
</evidence>
<evidence type="ECO:0000305" key="9"/>
<evidence type="ECO:0000305" key="10">
    <source>
    </source>
</evidence>
<feature type="chain" id="PRO_0000450483" description="Fatty acid synthase subunit alpha">
    <location>
        <begin position="1"/>
        <end position="1777"/>
    </location>
</feature>
<feature type="domain" description="Carrier" evidence="4">
    <location>
        <begin position="151"/>
        <end position="237"/>
    </location>
</feature>
<feature type="domain" description="Ketosynthase family 3 (KS3)" evidence="5">
    <location>
        <begin position="1007"/>
        <end position="1539"/>
    </location>
</feature>
<feature type="region of interest" description="Disordered" evidence="6">
    <location>
        <begin position="101"/>
        <end position="124"/>
    </location>
</feature>
<feature type="region of interest" description="Ketoreductase (KR) domain" evidence="2 3">
    <location>
        <begin position="563"/>
        <end position="803"/>
    </location>
</feature>
<feature type="compositionally biased region" description="Low complexity" evidence="6">
    <location>
        <begin position="110"/>
        <end position="120"/>
    </location>
</feature>
<feature type="active site" description="For beta-ketoacyl synthase activity" evidence="5">
    <location>
        <position position="1193"/>
    </location>
</feature>
<feature type="active site" description="For beta-ketoacyl synthase activity" evidence="5">
    <location>
        <position position="1424"/>
    </location>
</feature>
<feature type="active site" description="For beta-ketoacyl synthase activity" evidence="5">
    <location>
        <position position="1465"/>
    </location>
</feature>
<feature type="binding site" evidence="1">
    <location>
        <begin position="1661"/>
        <end position="1663"/>
    </location>
    <ligand>
        <name>acetyl-CoA</name>
        <dbReference type="ChEBI" id="CHEBI:57288"/>
    </ligand>
</feature>
<feature type="binding site" evidence="1">
    <location>
        <position position="1661"/>
    </location>
    <ligand>
        <name>Mg(2+)</name>
        <dbReference type="ChEBI" id="CHEBI:18420"/>
    </ligand>
</feature>
<feature type="binding site" evidence="1">
    <location>
        <begin position="1706"/>
        <end position="1716"/>
    </location>
    <ligand>
        <name>acetyl-CoA</name>
        <dbReference type="ChEBI" id="CHEBI:57288"/>
    </ligand>
</feature>
<feature type="binding site" evidence="1">
    <location>
        <begin position="1730"/>
        <end position="1734"/>
    </location>
    <ligand>
        <name>acetyl-CoA</name>
        <dbReference type="ChEBI" id="CHEBI:57288"/>
    </ligand>
</feature>
<feature type="binding site" evidence="1">
    <location>
        <begin position="1760"/>
        <end position="1762"/>
    </location>
    <ligand>
        <name>acetyl-CoA</name>
        <dbReference type="ChEBI" id="CHEBI:57288"/>
    </ligand>
</feature>
<feature type="modified residue" description="O-(pantetheine 4'-phosphoryl)serine" evidence="4">
    <location>
        <position position="186"/>
    </location>
</feature>
<dbReference type="EC" id="2.3.1.86" evidence="10"/>
<dbReference type="EC" id="1.1.1.100" evidence="1"/>
<dbReference type="EC" id="2.3.1.41" evidence="1"/>
<dbReference type="EMBL" id="BA000056">
    <property type="protein sequence ID" value="BAE66073.1"/>
    <property type="molecule type" value="Genomic_DNA"/>
</dbReference>
<dbReference type="RefSeq" id="XP_001827206.1">
    <property type="nucleotide sequence ID" value="XM_001827154.1"/>
</dbReference>
<dbReference type="SMR" id="Q2TXF0"/>
<dbReference type="STRING" id="510516.Q2TXF0"/>
<dbReference type="EnsemblFungi" id="BAE66073">
    <property type="protein sequence ID" value="BAE66073"/>
    <property type="gene ID" value="AO090010000171"/>
</dbReference>
<dbReference type="GeneID" id="5999340"/>
<dbReference type="KEGG" id="aor:AO090010000171"/>
<dbReference type="VEuPathDB" id="FungiDB:AO090010000171"/>
<dbReference type="HOGENOM" id="CLU_000114_0_0_1"/>
<dbReference type="OMA" id="WIDTQKE"/>
<dbReference type="OrthoDB" id="112788at5052"/>
<dbReference type="Proteomes" id="UP000006564">
    <property type="component" value="Chromosome 8"/>
</dbReference>
<dbReference type="GO" id="GO:0005835">
    <property type="term" value="C:fatty acid synthase complex"/>
    <property type="evidence" value="ECO:0007669"/>
    <property type="project" value="InterPro"/>
</dbReference>
<dbReference type="GO" id="GO:0004316">
    <property type="term" value="F:3-oxoacyl-[acyl-carrier-protein] reductase (NADPH) activity"/>
    <property type="evidence" value="ECO:0007669"/>
    <property type="project" value="UniProtKB-EC"/>
</dbReference>
<dbReference type="GO" id="GO:0004315">
    <property type="term" value="F:3-oxoacyl-[acyl-carrier-protein] synthase activity"/>
    <property type="evidence" value="ECO:0007669"/>
    <property type="project" value="UniProtKB-EC"/>
</dbReference>
<dbReference type="GO" id="GO:0004312">
    <property type="term" value="F:fatty acid synthase activity"/>
    <property type="evidence" value="ECO:0007669"/>
    <property type="project" value="InterPro"/>
</dbReference>
<dbReference type="GO" id="GO:0004321">
    <property type="term" value="F:fatty-acyl-CoA synthase activity"/>
    <property type="evidence" value="ECO:0007669"/>
    <property type="project" value="UniProtKB-EC"/>
</dbReference>
<dbReference type="GO" id="GO:0008897">
    <property type="term" value="F:holo-[acyl-carrier-protein] synthase activity"/>
    <property type="evidence" value="ECO:0007669"/>
    <property type="project" value="InterPro"/>
</dbReference>
<dbReference type="GO" id="GO:0000287">
    <property type="term" value="F:magnesium ion binding"/>
    <property type="evidence" value="ECO:0007669"/>
    <property type="project" value="InterPro"/>
</dbReference>
<dbReference type="GO" id="GO:0042759">
    <property type="term" value="P:long-chain fatty acid biosynthetic process"/>
    <property type="evidence" value="ECO:0007669"/>
    <property type="project" value="InterPro"/>
</dbReference>
<dbReference type="CDD" id="cd00828">
    <property type="entry name" value="elong_cond_enzymes"/>
    <property type="match status" value="1"/>
</dbReference>
<dbReference type="CDD" id="cd08950">
    <property type="entry name" value="KR_fFAS_SDR_c_like"/>
    <property type="match status" value="1"/>
</dbReference>
<dbReference type="FunFam" id="3.90.470.20:FF:000005">
    <property type="entry name" value="Fatty acid synthase alpha subunit FasA"/>
    <property type="match status" value="1"/>
</dbReference>
<dbReference type="FunFam" id="3.90.25.70:FF:000001">
    <property type="entry name" value="Fatty acid synthase subunit alpha"/>
    <property type="match status" value="1"/>
</dbReference>
<dbReference type="Gene3D" id="3.30.70.2490">
    <property type="match status" value="1"/>
</dbReference>
<dbReference type="Gene3D" id="3.40.47.10">
    <property type="match status" value="1"/>
</dbReference>
<dbReference type="Gene3D" id="3.90.25.70">
    <property type="match status" value="1"/>
</dbReference>
<dbReference type="Gene3D" id="6.10.140.1410">
    <property type="match status" value="1"/>
</dbReference>
<dbReference type="Gene3D" id="3.90.470.20">
    <property type="entry name" value="4'-phosphopantetheinyl transferase domain"/>
    <property type="match status" value="1"/>
</dbReference>
<dbReference type="Gene3D" id="3.40.50.720">
    <property type="entry name" value="NAD(P)-binding Rossmann-like Domain"/>
    <property type="match status" value="2"/>
</dbReference>
<dbReference type="HAMAP" id="MF_00101">
    <property type="entry name" value="AcpS"/>
    <property type="match status" value="1"/>
</dbReference>
<dbReference type="InterPro" id="IPR008278">
    <property type="entry name" value="4-PPantetheinyl_Trfase_dom"/>
</dbReference>
<dbReference type="InterPro" id="IPR037143">
    <property type="entry name" value="4-PPantetheinyl_Trfase_dom_sf"/>
</dbReference>
<dbReference type="InterPro" id="IPR002582">
    <property type="entry name" value="ACPS"/>
</dbReference>
<dbReference type="InterPro" id="IPR016035">
    <property type="entry name" value="Acyl_Trfase/lysoPLipase"/>
</dbReference>
<dbReference type="InterPro" id="IPR040899">
    <property type="entry name" value="Fas_alpha_ACP"/>
</dbReference>
<dbReference type="InterPro" id="IPR047224">
    <property type="entry name" value="FAS_alpha_su_C"/>
</dbReference>
<dbReference type="InterPro" id="IPR026025">
    <property type="entry name" value="FAS_alpha_yeast"/>
</dbReference>
<dbReference type="InterPro" id="IPR041550">
    <property type="entry name" value="FASI_helical"/>
</dbReference>
<dbReference type="InterPro" id="IPR050830">
    <property type="entry name" value="Fungal_FAS"/>
</dbReference>
<dbReference type="InterPro" id="IPR014031">
    <property type="entry name" value="Ketoacyl_synth_C"/>
</dbReference>
<dbReference type="InterPro" id="IPR014030">
    <property type="entry name" value="Ketoacyl_synth_N"/>
</dbReference>
<dbReference type="InterPro" id="IPR036291">
    <property type="entry name" value="NAD(P)-bd_dom_sf"/>
</dbReference>
<dbReference type="InterPro" id="IPR020841">
    <property type="entry name" value="PKS_Beta-ketoAc_synthase_dom"/>
</dbReference>
<dbReference type="InterPro" id="IPR004568">
    <property type="entry name" value="Ppantetheine-prot_Trfase_dom"/>
</dbReference>
<dbReference type="InterPro" id="IPR002347">
    <property type="entry name" value="SDR_fam"/>
</dbReference>
<dbReference type="InterPro" id="IPR016039">
    <property type="entry name" value="Thiolase-like"/>
</dbReference>
<dbReference type="NCBIfam" id="TIGR00556">
    <property type="entry name" value="pantethn_trn"/>
    <property type="match status" value="1"/>
</dbReference>
<dbReference type="PANTHER" id="PTHR10982:SF21">
    <property type="entry name" value="FATTY ACID SYNTHASE SUBUNIT BETA"/>
    <property type="match status" value="1"/>
</dbReference>
<dbReference type="PANTHER" id="PTHR10982">
    <property type="entry name" value="MALONYL COA-ACYL CARRIER PROTEIN TRANSACYLASE"/>
    <property type="match status" value="1"/>
</dbReference>
<dbReference type="Pfam" id="PF01648">
    <property type="entry name" value="ACPS"/>
    <property type="match status" value="1"/>
</dbReference>
<dbReference type="Pfam" id="PF00106">
    <property type="entry name" value="adh_short"/>
    <property type="match status" value="1"/>
</dbReference>
<dbReference type="Pfam" id="PF18325">
    <property type="entry name" value="Fas_alpha_ACP"/>
    <property type="match status" value="1"/>
</dbReference>
<dbReference type="Pfam" id="PF18314">
    <property type="entry name" value="FAS_I_H"/>
    <property type="match status" value="1"/>
</dbReference>
<dbReference type="Pfam" id="PF00109">
    <property type="entry name" value="ketoacyl-synt"/>
    <property type="match status" value="1"/>
</dbReference>
<dbReference type="Pfam" id="PF02801">
    <property type="entry name" value="Ketoacyl-synt_C"/>
    <property type="match status" value="1"/>
</dbReference>
<dbReference type="PIRSF" id="PIRSF000454">
    <property type="entry name" value="FAS_yeast_alpha"/>
    <property type="match status" value="1"/>
</dbReference>
<dbReference type="SUPFAM" id="SSF56214">
    <property type="entry name" value="4'-phosphopantetheinyl transferase"/>
    <property type="match status" value="1"/>
</dbReference>
<dbReference type="SUPFAM" id="SSF52151">
    <property type="entry name" value="FabD/lysophospholipase-like"/>
    <property type="match status" value="1"/>
</dbReference>
<dbReference type="SUPFAM" id="SSF51735">
    <property type="entry name" value="NAD(P)-binding Rossmann-fold domains"/>
    <property type="match status" value="1"/>
</dbReference>
<dbReference type="SUPFAM" id="SSF53901">
    <property type="entry name" value="Thiolase-like"/>
    <property type="match status" value="2"/>
</dbReference>
<dbReference type="PROSITE" id="PS52004">
    <property type="entry name" value="KS3_2"/>
    <property type="match status" value="1"/>
</dbReference>
<reference key="1">
    <citation type="journal article" date="2005" name="Nature">
        <title>Genome sequencing and analysis of Aspergillus oryzae.</title>
        <authorList>
            <person name="Machida M."/>
            <person name="Asai K."/>
            <person name="Sano M."/>
            <person name="Tanaka T."/>
            <person name="Kumagai T."/>
            <person name="Terai G."/>
            <person name="Kusumoto K."/>
            <person name="Arima T."/>
            <person name="Akita O."/>
            <person name="Kashiwagi Y."/>
            <person name="Abe K."/>
            <person name="Gomi K."/>
            <person name="Horiuchi H."/>
            <person name="Kitamoto K."/>
            <person name="Kobayashi T."/>
            <person name="Takeuchi M."/>
            <person name="Denning D.W."/>
            <person name="Galagan J.E."/>
            <person name="Nierman W.C."/>
            <person name="Yu J."/>
            <person name="Archer D.B."/>
            <person name="Bennett J.W."/>
            <person name="Bhatnagar D."/>
            <person name="Cleveland T.E."/>
            <person name="Fedorova N.D."/>
            <person name="Gotoh O."/>
            <person name="Horikawa H."/>
            <person name="Hosoyama A."/>
            <person name="Ichinomiya M."/>
            <person name="Igarashi R."/>
            <person name="Iwashita K."/>
            <person name="Juvvadi P.R."/>
            <person name="Kato M."/>
            <person name="Kato Y."/>
            <person name="Kin T."/>
            <person name="Kokubun A."/>
            <person name="Maeda H."/>
            <person name="Maeyama N."/>
            <person name="Maruyama J."/>
            <person name="Nagasaki H."/>
            <person name="Nakajima T."/>
            <person name="Oda K."/>
            <person name="Okada K."/>
            <person name="Paulsen I."/>
            <person name="Sakamoto K."/>
            <person name="Sawano T."/>
            <person name="Takahashi M."/>
            <person name="Takase K."/>
            <person name="Terabayashi Y."/>
            <person name="Wortman J.R."/>
            <person name="Yamada O."/>
            <person name="Yamagata Y."/>
            <person name="Anazawa H."/>
            <person name="Hata Y."/>
            <person name="Koide Y."/>
            <person name="Komori T."/>
            <person name="Koyama Y."/>
            <person name="Minetoki T."/>
            <person name="Suharnan S."/>
            <person name="Tanaka A."/>
            <person name="Isono K."/>
            <person name="Kuhara S."/>
            <person name="Ogasawara N."/>
            <person name="Kikuchi H."/>
        </authorList>
    </citation>
    <scope>NUCLEOTIDE SEQUENCE [LARGE SCALE GENOMIC DNA]</scope>
    <source>
        <strain>ATCC 42149 / RIB 40</strain>
    </source>
</reference>
<reference key="2">
    <citation type="journal article" date="2018" name="J. Fungi">
        <title>Oryzines A &amp; B, maleidride congeners from Aspergillus oryzae and their putative biosynthesis.</title>
        <authorList>
            <person name="Wasil Z."/>
            <person name="Kuhnert E."/>
            <person name="Simpson T.J."/>
            <person name="Cox R.J."/>
        </authorList>
    </citation>
    <scope>FUNCTION</scope>
    <scope>PATHWAY</scope>
</reference>
<proteinExistence type="inferred from homology"/>
<accession>Q2TXF0</accession>
<sequence>MVQRKDPPSEQLRAYTLLIELLSYQFAFPVRWIETQNDLIQRNNTIQRFVEVGPSNVLANMAKKTAKGQYAEEDLVRCVDRQYLSHADDAQHIYYQYDEEAPVESADNEPAQPAASSTPAAPAPVAAPPVVVQTAPQPAAQAAVAVPDVDLSAIDVVISIVAQKIRKAFDEVPAAKSIRDLSAGKSTLQNELIGQLDAEFRGLPEGSEDLALEALASHFTNFSGRPGKVMGGHIDRLVAARMPAGFNQAKIRDYLSSHWGLGLNRQTTVLCYAVTMEPAARLADAGQATQFLDSVVSRYGGKAGIALQKRAEGGASQTSAVAQVDLASLETLKKEQNEYLHKQFQLLAKHLDLDGVAQPSQTQVQGEDTDRLAEWDAEFDEEFLTGMRTIFDPRKARRYDSWWNTAREDLMALLHDIRPAAEDKASQRYQSLVNRWSPELEQMLEHSAQDDTTKEKAQMLLDDVRASGVANGPVFRYTQPAMAPETKVDANGRIQYSEVPRRQLHGENKASTLNYAQVVAARHRDVPYAHLRSRAGVDWKYDDQLTDMFLNILSTGASTGLSFTGRRVLVTGAGVGSIGADIVAGLLAGGAHVIVTTSRQPSDVAASFRQLYAKVGAPGSELIVLPFNQASKRDCEELINHIYDEQSGYGWDLDFIIPFAAISEIGRQIDKIDSKSELAHRAMLVNLLRLLGFIKQQKEKRGFDCRPTGVLLPLSPNHGNFGGDGLYSESKLGLETLFNRFHSEGWSDFLCIIGAVIGWTRGTGLMSANNIVAQGMEDSLDILTFSAPEMAFNILSLLSGDILEVADDEPIYADLSGGLQGVSDLKDKISAIRKKIVSDSRIRQALVAENLHEQKVLRGTKPAEGNVQPPLKRRSNIEPAFPPLSDYNSVTAGLQSLKGMVDLSRTVVVVGYSELGPWGSSRTRWEMEHEGRLSLEGYTELAWMMGLIKHFDGDLKGKPYTGWVDSKTKEAVDEADIEEKYGQHILGHAGIRVIEPELSEGYDPSQKEIMHEVVIDEDLPPFEAPQGVAQAFKLRHGDKVILTPIEGSESVKVVVKSGAVFMVPKAMAFNRFVAGQLPSGWDPTRYGIPEDIVAQVDPMTVYVLCCVSEAMYSAGLEDPFELYRHIHVSELANCVGTGAGGLLAMRGVYRDRYLDRPVQSDILQESFLNAMNAWTNMLLMGAAGPIKSPSGTCATSVESMDIACEAIQTLKAKVAIVGGSDDFQEEMSYEFGNMKATANAEDELEKGYLPSEMSRPTASSRSGFVESAGCGIQLVMSAELALQMGLPIYGIVAYSQMAGDKVGRSVPAPGQGVLTAARESIDAAQSPLLDVQYRKARLDEAVSEIKRWRHKESQKLIASTTSKEFKDLDAHLQHINNIAATRIRDAQWTWNNNIRHIDPTIAPMRAALATWGLSVDDIQVASFHGTSTKANDKNESNVINQQMTHLSRTVGNPLLVICQKSLTGHPKGAAGAWMFNGCLQALQTGIVPGNRNADNVDVALQQFKHLVYPSQTIHTSGIKAFMLTSFGFGQKGGLVVGIAPRYLFSTITANKFEDYRERVLQRQQKIIPVFQRRMAQGRLFQIKDQSAWTSDQEKDVFLNPQARVAQKSTGEYSFPTTVAPVASSLPARTVSDDKQLFARSSDQWLRDSISKEQGNVSVGVDIESISSVNIEDEIFLERNFTPGELKYCQGSPDKQASLSGRWAAKEAIFKSLQIPSEGAGAAMRDIEIVSNGAQPPTVLLHNRAKSAADAQKVEEVQVSITHSPESAMAIALARRRL</sequence>
<organism>
    <name type="scientific">Aspergillus oryzae (strain ATCC 42149 / RIB 40)</name>
    <name type="common">Yellow koji mold</name>
    <dbReference type="NCBI Taxonomy" id="510516"/>
    <lineage>
        <taxon>Eukaryota</taxon>
        <taxon>Fungi</taxon>
        <taxon>Dikarya</taxon>
        <taxon>Ascomycota</taxon>
        <taxon>Pezizomycotina</taxon>
        <taxon>Eurotiomycetes</taxon>
        <taxon>Eurotiomycetidae</taxon>
        <taxon>Eurotiales</taxon>
        <taxon>Aspergillaceae</taxon>
        <taxon>Aspergillus</taxon>
        <taxon>Aspergillus subgen. Circumdati</taxon>
    </lineage>
</organism>
<comment type="function">
    <text evidence="7 10">Fatty acid synthase alpha subunit; part of the gene cluster that mediates the biosynthesis of oryzines, natural products with an unusual maleidride backbone (PubMed:30104550). The two subunits of the fungal fatty acid synthase oryfasA and oryfasB probably form octenoic acid (Probable). This fatty acid is most likely activated by the acyl-CoA ligase oryP to give octenyl-CoA before the citrate synthase-like protein oryE catalyzes condensation with oxaloacetate to form tricarboxylic acid (Probable). The next steps of the pathways are conjectural, but a favorite possible route has been proposed, beginning with decarboxylation and concomitant dehydration by the decarboxylase oryM, followed by tautomerization, which may lead to the production of a diene intermediate (Probable). Reduction of this diene intermediate could give the known metabolite piliformic acid (Probable). On the pathway to oryzine B and oryzine A, however, hydroxylation of the diene by the alpha-ketoglutarate-dependent dioxygenase oryG and lactonisation by the lactonohydrolases oryH or oryL could give oryzine B directly (Probable). Finally, enoyl reduction by the dehydrogenase oryD would then convert oryzine B into oryzine A (Probable).</text>
</comment>
<comment type="catalytic activity">
    <reaction evidence="10">
        <text>acetyl-CoA + n malonyl-CoA + 2n NADPH + 4n H(+) = a long-chain-acyl-CoA + n CoA + n CO2 + 2n NADP(+).</text>
        <dbReference type="EC" id="2.3.1.86"/>
    </reaction>
</comment>
<comment type="catalytic activity">
    <reaction evidence="1">
        <text>a fatty acyl-[ACP] + malonyl-[ACP] + H(+) = a 3-oxoacyl-[ACP] + holo-[ACP] + CO2</text>
        <dbReference type="Rhea" id="RHEA:22836"/>
        <dbReference type="Rhea" id="RHEA-COMP:9623"/>
        <dbReference type="Rhea" id="RHEA-COMP:9685"/>
        <dbReference type="Rhea" id="RHEA-COMP:9916"/>
        <dbReference type="Rhea" id="RHEA-COMP:14125"/>
        <dbReference type="ChEBI" id="CHEBI:15378"/>
        <dbReference type="ChEBI" id="CHEBI:16526"/>
        <dbReference type="ChEBI" id="CHEBI:64479"/>
        <dbReference type="ChEBI" id="CHEBI:78449"/>
        <dbReference type="ChEBI" id="CHEBI:78776"/>
        <dbReference type="ChEBI" id="CHEBI:138651"/>
        <dbReference type="EC" id="2.3.1.41"/>
    </reaction>
</comment>
<comment type="catalytic activity">
    <reaction evidence="1">
        <text>a (3R)-hydroxyacyl-[ACP] + NADP(+) = a 3-oxoacyl-[ACP] + NADPH + H(+)</text>
        <dbReference type="Rhea" id="RHEA:17397"/>
        <dbReference type="Rhea" id="RHEA-COMP:9916"/>
        <dbReference type="Rhea" id="RHEA-COMP:9945"/>
        <dbReference type="ChEBI" id="CHEBI:15378"/>
        <dbReference type="ChEBI" id="CHEBI:57783"/>
        <dbReference type="ChEBI" id="CHEBI:58349"/>
        <dbReference type="ChEBI" id="CHEBI:78776"/>
        <dbReference type="ChEBI" id="CHEBI:78827"/>
        <dbReference type="EC" id="1.1.1.100"/>
    </reaction>
</comment>
<comment type="pathway">
    <text evidence="10">Secondary metabolite biosynthesis.</text>
</comment>
<comment type="subunit">
    <text evidence="1">Fatty acid synthase is composed of alpha and beta subunits.</text>
</comment>
<comment type="similarity">
    <text evidence="9">Belongs to the thiolase-like superfamily. Fungal fatty acid synthetase subunit alpha family.</text>
</comment>
<keyword id="KW-0275">Fatty acid biosynthesis</keyword>
<keyword id="KW-0276">Fatty acid metabolism</keyword>
<keyword id="KW-0444">Lipid biosynthesis</keyword>
<keyword id="KW-0443">Lipid metabolism</keyword>
<keyword id="KW-0460">Magnesium</keyword>
<keyword id="KW-0479">Metal-binding</keyword>
<keyword id="KW-0511">Multifunctional enzyme</keyword>
<keyword id="KW-0521">NADP</keyword>
<keyword id="KW-0560">Oxidoreductase</keyword>
<keyword id="KW-0596">Phosphopantetheine</keyword>
<keyword id="KW-0597">Phosphoprotein</keyword>
<keyword id="KW-1185">Reference proteome</keyword>
<keyword id="KW-0808">Transferase</keyword>
<protein>
    <recommendedName>
        <fullName evidence="8">Fatty acid synthase subunit alpha</fullName>
        <ecNumber evidence="10">2.3.1.86</ecNumber>
    </recommendedName>
    <alternativeName>
        <fullName evidence="8">Oryzines biosynthesis cluster protein oryfasA</fullName>
    </alternativeName>
    <domain>
        <recommendedName>
            <fullName evidence="1">3-oxoacyl-[acyl-carrier-protein] reductase</fullName>
            <ecNumber evidence="1">1.1.1.100</ecNumber>
        </recommendedName>
        <alternativeName>
            <fullName evidence="1">Beta-ketoacyl reductase</fullName>
        </alternativeName>
    </domain>
    <domain>
        <recommendedName>
            <fullName evidence="1">3-oxoacyl-[acyl-carrier-protein] synthase</fullName>
            <ecNumber evidence="1">2.3.1.41</ecNumber>
        </recommendedName>
    </domain>
</protein>